<dbReference type="EC" id="7.1.2.2" evidence="1"/>
<dbReference type="EMBL" id="AM849034">
    <property type="protein sequence ID" value="CAQ02028.1"/>
    <property type="status" value="ALT_INIT"/>
    <property type="molecule type" value="Genomic_DNA"/>
</dbReference>
<dbReference type="RefSeq" id="WP_041464594.1">
    <property type="nucleotide sequence ID" value="NZ_MZMN01000003.1"/>
</dbReference>
<dbReference type="SMR" id="B0RED6"/>
<dbReference type="STRING" id="31964.CMS1926"/>
<dbReference type="KEGG" id="cms:CMS1926"/>
<dbReference type="eggNOG" id="COG0056">
    <property type="taxonomic scope" value="Bacteria"/>
</dbReference>
<dbReference type="HOGENOM" id="CLU_010091_2_1_11"/>
<dbReference type="OrthoDB" id="9803053at2"/>
<dbReference type="Proteomes" id="UP000001318">
    <property type="component" value="Chromosome"/>
</dbReference>
<dbReference type="GO" id="GO:0005886">
    <property type="term" value="C:plasma membrane"/>
    <property type="evidence" value="ECO:0007669"/>
    <property type="project" value="UniProtKB-SubCell"/>
</dbReference>
<dbReference type="GO" id="GO:0045259">
    <property type="term" value="C:proton-transporting ATP synthase complex"/>
    <property type="evidence" value="ECO:0007669"/>
    <property type="project" value="UniProtKB-KW"/>
</dbReference>
<dbReference type="GO" id="GO:0043531">
    <property type="term" value="F:ADP binding"/>
    <property type="evidence" value="ECO:0007669"/>
    <property type="project" value="TreeGrafter"/>
</dbReference>
<dbReference type="GO" id="GO:0005524">
    <property type="term" value="F:ATP binding"/>
    <property type="evidence" value="ECO:0007669"/>
    <property type="project" value="UniProtKB-UniRule"/>
</dbReference>
<dbReference type="GO" id="GO:0046933">
    <property type="term" value="F:proton-transporting ATP synthase activity, rotational mechanism"/>
    <property type="evidence" value="ECO:0007669"/>
    <property type="project" value="UniProtKB-UniRule"/>
</dbReference>
<dbReference type="CDD" id="cd18113">
    <property type="entry name" value="ATP-synt_F1_alpha_C"/>
    <property type="match status" value="1"/>
</dbReference>
<dbReference type="CDD" id="cd18116">
    <property type="entry name" value="ATP-synt_F1_alpha_N"/>
    <property type="match status" value="1"/>
</dbReference>
<dbReference type="CDD" id="cd01132">
    <property type="entry name" value="F1-ATPase_alpha_CD"/>
    <property type="match status" value="1"/>
</dbReference>
<dbReference type="FunFam" id="1.20.150.20:FF:000001">
    <property type="entry name" value="ATP synthase subunit alpha"/>
    <property type="match status" value="1"/>
</dbReference>
<dbReference type="FunFam" id="3.40.50.300:FF:000002">
    <property type="entry name" value="ATP synthase subunit alpha"/>
    <property type="match status" value="1"/>
</dbReference>
<dbReference type="Gene3D" id="2.40.30.20">
    <property type="match status" value="1"/>
</dbReference>
<dbReference type="Gene3D" id="1.20.150.20">
    <property type="entry name" value="ATP synthase alpha/beta chain, C-terminal domain"/>
    <property type="match status" value="1"/>
</dbReference>
<dbReference type="Gene3D" id="3.40.50.300">
    <property type="entry name" value="P-loop containing nucleotide triphosphate hydrolases"/>
    <property type="match status" value="1"/>
</dbReference>
<dbReference type="HAMAP" id="MF_01346">
    <property type="entry name" value="ATP_synth_alpha_bact"/>
    <property type="match status" value="1"/>
</dbReference>
<dbReference type="InterPro" id="IPR023366">
    <property type="entry name" value="ATP_synth_asu-like_sf"/>
</dbReference>
<dbReference type="InterPro" id="IPR000793">
    <property type="entry name" value="ATP_synth_asu_C"/>
</dbReference>
<dbReference type="InterPro" id="IPR038376">
    <property type="entry name" value="ATP_synth_asu_C_sf"/>
</dbReference>
<dbReference type="InterPro" id="IPR033732">
    <property type="entry name" value="ATP_synth_F1_a_nt-bd_dom"/>
</dbReference>
<dbReference type="InterPro" id="IPR005294">
    <property type="entry name" value="ATP_synth_F1_asu"/>
</dbReference>
<dbReference type="InterPro" id="IPR020003">
    <property type="entry name" value="ATPase_a/bsu_AS"/>
</dbReference>
<dbReference type="InterPro" id="IPR004100">
    <property type="entry name" value="ATPase_F1/V1/A1_a/bsu_N"/>
</dbReference>
<dbReference type="InterPro" id="IPR036121">
    <property type="entry name" value="ATPase_F1/V1/A1_a/bsu_N_sf"/>
</dbReference>
<dbReference type="InterPro" id="IPR000194">
    <property type="entry name" value="ATPase_F1/V1/A1_a/bsu_nucl-bd"/>
</dbReference>
<dbReference type="InterPro" id="IPR027417">
    <property type="entry name" value="P-loop_NTPase"/>
</dbReference>
<dbReference type="NCBIfam" id="TIGR00962">
    <property type="entry name" value="atpA"/>
    <property type="match status" value="1"/>
</dbReference>
<dbReference type="NCBIfam" id="NF009884">
    <property type="entry name" value="PRK13343.1"/>
    <property type="match status" value="1"/>
</dbReference>
<dbReference type="PANTHER" id="PTHR48082">
    <property type="entry name" value="ATP SYNTHASE SUBUNIT ALPHA, MITOCHONDRIAL"/>
    <property type="match status" value="1"/>
</dbReference>
<dbReference type="PANTHER" id="PTHR48082:SF2">
    <property type="entry name" value="ATP SYNTHASE SUBUNIT ALPHA, MITOCHONDRIAL"/>
    <property type="match status" value="1"/>
</dbReference>
<dbReference type="Pfam" id="PF00006">
    <property type="entry name" value="ATP-synt_ab"/>
    <property type="match status" value="1"/>
</dbReference>
<dbReference type="Pfam" id="PF00306">
    <property type="entry name" value="ATP-synt_ab_C"/>
    <property type="match status" value="1"/>
</dbReference>
<dbReference type="Pfam" id="PF02874">
    <property type="entry name" value="ATP-synt_ab_N"/>
    <property type="match status" value="1"/>
</dbReference>
<dbReference type="SUPFAM" id="SSF47917">
    <property type="entry name" value="C-terminal domain of alpha and beta subunits of F1 ATP synthase"/>
    <property type="match status" value="1"/>
</dbReference>
<dbReference type="SUPFAM" id="SSF50615">
    <property type="entry name" value="N-terminal domain of alpha and beta subunits of F1 ATP synthase"/>
    <property type="match status" value="1"/>
</dbReference>
<dbReference type="SUPFAM" id="SSF52540">
    <property type="entry name" value="P-loop containing nucleoside triphosphate hydrolases"/>
    <property type="match status" value="1"/>
</dbReference>
<dbReference type="PROSITE" id="PS00152">
    <property type="entry name" value="ATPASE_ALPHA_BETA"/>
    <property type="match status" value="1"/>
</dbReference>
<reference key="1">
    <citation type="journal article" date="2008" name="J. Bacteriol.">
        <title>Genome of the actinomycete plant pathogen Clavibacter michiganensis subsp. sepedonicus suggests recent niche adaptation.</title>
        <authorList>
            <person name="Bentley S.D."/>
            <person name="Corton C."/>
            <person name="Brown S.E."/>
            <person name="Barron A."/>
            <person name="Clark L."/>
            <person name="Doggett J."/>
            <person name="Harris B."/>
            <person name="Ormond D."/>
            <person name="Quail M.A."/>
            <person name="May G."/>
            <person name="Francis D."/>
            <person name="Knudson D."/>
            <person name="Parkhill J."/>
            <person name="Ishimaru C.A."/>
        </authorList>
    </citation>
    <scope>NUCLEOTIDE SEQUENCE [LARGE SCALE GENOMIC DNA]</scope>
    <source>
        <strain>ATCC 33113 / DSM 20744 / JCM 9667 / LMG 2889 / ICMP 2535 / C-1</strain>
    </source>
</reference>
<evidence type="ECO:0000255" key="1">
    <source>
        <dbReference type="HAMAP-Rule" id="MF_01346"/>
    </source>
</evidence>
<evidence type="ECO:0000305" key="2"/>
<keyword id="KW-0066">ATP synthesis</keyword>
<keyword id="KW-0067">ATP-binding</keyword>
<keyword id="KW-1003">Cell membrane</keyword>
<keyword id="KW-0139">CF(1)</keyword>
<keyword id="KW-0375">Hydrogen ion transport</keyword>
<keyword id="KW-0406">Ion transport</keyword>
<keyword id="KW-0472">Membrane</keyword>
<keyword id="KW-0547">Nucleotide-binding</keyword>
<keyword id="KW-1278">Translocase</keyword>
<keyword id="KW-0813">Transport</keyword>
<gene>
    <name evidence="1" type="primary">atpA</name>
    <name type="ordered locus">CMS1926</name>
</gene>
<sequence>MAELSISPDEIRDALKDFVQSYEPGKASTTEVGYVLDAGDGIAHVQGLPGVMANELITFADGTLGLAQNLEESEIGVIVLGEFAGIEEGMEVRRTGEVLSVPVGDGYLGRVVDPLGNPIDGQGEIANEGRRALELQAPGVMQRKSVHEPMQTGIKAIDAMIPIGRGQRQLIIGDRQTGKTAIAIDTIINQKANWESGDTNKQVRCIYVAIGQKGSTIASVRGALEEAGAMEYTTIVASPASDPAGFKYLAPYTGSAIGQHWMYGGKHVLIIFDDLSKQAEAYRAVSLLLRRPPGREAYPGDVFYLHSRLLERCAKLSDELGAGSMTGLPIIETKANDVSAYIPTNVISITDGQIFLQSDLFNANQRPAVDVGISVSRVGGDAQVKSIKKVSGTLKLELAQYRSLEAFAIFASDLDAASRRQLARGARLTELLKQPQYSPFPIEEQVVSIWAGTKGKLDEVPVEDILRFERELLDHLHRNTEVLSQLKEKNVLTDDIIDAMDKAVDRFKLEFQTGEGKPLASVGSEKFEPAKAEDVNQEQIVKGKR</sequence>
<protein>
    <recommendedName>
        <fullName evidence="1">ATP synthase subunit alpha</fullName>
        <ecNumber evidence="1">7.1.2.2</ecNumber>
    </recommendedName>
    <alternativeName>
        <fullName evidence="1">ATP synthase F1 sector subunit alpha</fullName>
    </alternativeName>
    <alternativeName>
        <fullName evidence="1">F-ATPase subunit alpha</fullName>
    </alternativeName>
</protein>
<comment type="function">
    <text evidence="1">Produces ATP from ADP in the presence of a proton gradient across the membrane. The alpha chain is a regulatory subunit.</text>
</comment>
<comment type="catalytic activity">
    <reaction evidence="1">
        <text>ATP + H2O + 4 H(+)(in) = ADP + phosphate + 5 H(+)(out)</text>
        <dbReference type="Rhea" id="RHEA:57720"/>
        <dbReference type="ChEBI" id="CHEBI:15377"/>
        <dbReference type="ChEBI" id="CHEBI:15378"/>
        <dbReference type="ChEBI" id="CHEBI:30616"/>
        <dbReference type="ChEBI" id="CHEBI:43474"/>
        <dbReference type="ChEBI" id="CHEBI:456216"/>
        <dbReference type="EC" id="7.1.2.2"/>
    </reaction>
</comment>
<comment type="subunit">
    <text evidence="1">F-type ATPases have 2 components, CF(1) - the catalytic core - and CF(0) - the membrane proton channel. CF(1) has five subunits: alpha(3), beta(3), gamma(1), delta(1), epsilon(1). CF(0) has three main subunits: a(1), b(2) and c(9-12). The alpha and beta chains form an alternating ring which encloses part of the gamma chain. CF(1) is attached to CF(0) by a central stalk formed by the gamma and epsilon chains, while a peripheral stalk is formed by the delta and b chains.</text>
</comment>
<comment type="subcellular location">
    <subcellularLocation>
        <location evidence="1">Cell membrane</location>
        <topology evidence="1">Peripheral membrane protein</topology>
    </subcellularLocation>
</comment>
<comment type="similarity">
    <text evidence="1">Belongs to the ATPase alpha/beta chains family.</text>
</comment>
<comment type="sequence caution" evidence="2">
    <conflict type="erroneous initiation">
        <sequence resource="EMBL-CDS" id="CAQ02028"/>
    </conflict>
</comment>
<name>ATPA_CLASE</name>
<proteinExistence type="inferred from homology"/>
<accession>B0RED6</accession>
<feature type="chain" id="PRO_0000339029" description="ATP synthase subunit alpha">
    <location>
        <begin position="1"/>
        <end position="545"/>
    </location>
</feature>
<feature type="binding site" evidence="1">
    <location>
        <begin position="173"/>
        <end position="180"/>
    </location>
    <ligand>
        <name>ATP</name>
        <dbReference type="ChEBI" id="CHEBI:30616"/>
    </ligand>
</feature>
<feature type="site" description="Required for activity" evidence="1">
    <location>
        <position position="374"/>
    </location>
</feature>
<organism>
    <name type="scientific">Clavibacter sepedonicus</name>
    <name type="common">Clavibacter michiganensis subsp. sepedonicus</name>
    <dbReference type="NCBI Taxonomy" id="31964"/>
    <lineage>
        <taxon>Bacteria</taxon>
        <taxon>Bacillati</taxon>
        <taxon>Actinomycetota</taxon>
        <taxon>Actinomycetes</taxon>
        <taxon>Micrococcales</taxon>
        <taxon>Microbacteriaceae</taxon>
        <taxon>Clavibacter</taxon>
    </lineage>
</organism>